<evidence type="ECO:0000250" key="1"/>
<evidence type="ECO:0000255" key="2">
    <source>
        <dbReference type="PROSITE-ProRule" id="PRU00465"/>
    </source>
</evidence>
<evidence type="ECO:0000255" key="3">
    <source>
        <dbReference type="PROSITE-ProRule" id="PRU00711"/>
    </source>
</evidence>
<evidence type="ECO:0000305" key="4"/>
<dbReference type="EC" id="1.3.5.1"/>
<dbReference type="EMBL" id="AJ575686">
    <property type="protein sequence ID" value="CAE02642.1"/>
    <property type="molecule type" value="Genomic_DNA"/>
</dbReference>
<dbReference type="SMR" id="Q70KF8"/>
<dbReference type="UniPathway" id="UPA00223">
    <property type="reaction ID" value="UER01006"/>
</dbReference>
<dbReference type="GO" id="GO:0005743">
    <property type="term" value="C:mitochondrial inner membrane"/>
    <property type="evidence" value="ECO:0007669"/>
    <property type="project" value="UniProtKB-SubCell"/>
</dbReference>
<dbReference type="GO" id="GO:0051537">
    <property type="term" value="F:2 iron, 2 sulfur cluster binding"/>
    <property type="evidence" value="ECO:0007669"/>
    <property type="project" value="UniProtKB-KW"/>
</dbReference>
<dbReference type="GO" id="GO:0051538">
    <property type="term" value="F:3 iron, 4 sulfur cluster binding"/>
    <property type="evidence" value="ECO:0007669"/>
    <property type="project" value="UniProtKB-KW"/>
</dbReference>
<dbReference type="GO" id="GO:0051539">
    <property type="term" value="F:4 iron, 4 sulfur cluster binding"/>
    <property type="evidence" value="ECO:0007669"/>
    <property type="project" value="UniProtKB-KW"/>
</dbReference>
<dbReference type="GO" id="GO:0009055">
    <property type="term" value="F:electron transfer activity"/>
    <property type="evidence" value="ECO:0007669"/>
    <property type="project" value="InterPro"/>
</dbReference>
<dbReference type="GO" id="GO:0046872">
    <property type="term" value="F:metal ion binding"/>
    <property type="evidence" value="ECO:0007669"/>
    <property type="project" value="UniProtKB-KW"/>
</dbReference>
<dbReference type="GO" id="GO:0008177">
    <property type="term" value="F:succinate dehydrogenase (quinone) activity"/>
    <property type="evidence" value="ECO:0007669"/>
    <property type="project" value="UniProtKB-EC"/>
</dbReference>
<dbReference type="GO" id="GO:0022904">
    <property type="term" value="P:respiratory electron transport chain"/>
    <property type="evidence" value="ECO:0007669"/>
    <property type="project" value="TreeGrafter"/>
</dbReference>
<dbReference type="GO" id="GO:0006099">
    <property type="term" value="P:tricarboxylic acid cycle"/>
    <property type="evidence" value="ECO:0007669"/>
    <property type="project" value="UniProtKB-UniPathway"/>
</dbReference>
<dbReference type="CDD" id="cd00207">
    <property type="entry name" value="fer2"/>
    <property type="match status" value="1"/>
</dbReference>
<dbReference type="FunFam" id="3.10.20.30:FF:000007">
    <property type="entry name" value="Succinate dehydrogenase [ubiquinone] iron-sulfur subunit, mitochondrial"/>
    <property type="match status" value="1"/>
</dbReference>
<dbReference type="FunFam" id="1.10.1060.10:FF:000001">
    <property type="entry name" value="Succinate dehydrogenase iron-sulfur subunit SdhB"/>
    <property type="match status" value="1"/>
</dbReference>
<dbReference type="Gene3D" id="3.10.20.30">
    <property type="match status" value="1"/>
</dbReference>
<dbReference type="Gene3D" id="1.10.1060.10">
    <property type="entry name" value="Alpha-helical ferredoxin"/>
    <property type="match status" value="1"/>
</dbReference>
<dbReference type="InterPro" id="IPR036010">
    <property type="entry name" value="2Fe-2S_ferredoxin-like_sf"/>
</dbReference>
<dbReference type="InterPro" id="IPR001041">
    <property type="entry name" value="2Fe-2S_ferredoxin-type"/>
</dbReference>
<dbReference type="InterPro" id="IPR006058">
    <property type="entry name" value="2Fe2S_fd_BS"/>
</dbReference>
<dbReference type="InterPro" id="IPR017896">
    <property type="entry name" value="4Fe4S_Fe-S-bd"/>
</dbReference>
<dbReference type="InterPro" id="IPR017900">
    <property type="entry name" value="4Fe4S_Fe_S_CS"/>
</dbReference>
<dbReference type="InterPro" id="IPR012675">
    <property type="entry name" value="Beta-grasp_dom_sf"/>
</dbReference>
<dbReference type="InterPro" id="IPR009051">
    <property type="entry name" value="Helical_ferredxn"/>
</dbReference>
<dbReference type="InterPro" id="IPR050573">
    <property type="entry name" value="SDH/FRD_Iron-Sulfur"/>
</dbReference>
<dbReference type="InterPro" id="IPR004489">
    <property type="entry name" value="Succ_DH/fum_Rdtase_Fe-S"/>
</dbReference>
<dbReference type="InterPro" id="IPR025192">
    <property type="entry name" value="Succ_DH/fum_Rdtase_N"/>
</dbReference>
<dbReference type="NCBIfam" id="TIGR00384">
    <property type="entry name" value="dhsB"/>
    <property type="match status" value="1"/>
</dbReference>
<dbReference type="NCBIfam" id="NF004616">
    <property type="entry name" value="PRK05950.1"/>
    <property type="match status" value="1"/>
</dbReference>
<dbReference type="PANTHER" id="PTHR11921:SF29">
    <property type="entry name" value="SUCCINATE DEHYDROGENASE [UBIQUINONE] IRON-SULFUR SUBUNIT, MITOCHONDRIAL"/>
    <property type="match status" value="1"/>
</dbReference>
<dbReference type="PANTHER" id="PTHR11921">
    <property type="entry name" value="SUCCINATE DEHYDROGENASE IRON-SULFUR PROTEIN"/>
    <property type="match status" value="1"/>
</dbReference>
<dbReference type="Pfam" id="PF13085">
    <property type="entry name" value="Fer2_3"/>
    <property type="match status" value="1"/>
</dbReference>
<dbReference type="Pfam" id="PF13534">
    <property type="entry name" value="Fer4_17"/>
    <property type="match status" value="1"/>
</dbReference>
<dbReference type="SUPFAM" id="SSF54292">
    <property type="entry name" value="2Fe-2S ferredoxin-like"/>
    <property type="match status" value="1"/>
</dbReference>
<dbReference type="SUPFAM" id="SSF46548">
    <property type="entry name" value="alpha-helical ferredoxin"/>
    <property type="match status" value="1"/>
</dbReference>
<dbReference type="PROSITE" id="PS00197">
    <property type="entry name" value="2FE2S_FER_1"/>
    <property type="match status" value="1"/>
</dbReference>
<dbReference type="PROSITE" id="PS51085">
    <property type="entry name" value="2FE2S_FER_2"/>
    <property type="match status" value="1"/>
</dbReference>
<dbReference type="PROSITE" id="PS00198">
    <property type="entry name" value="4FE4S_FER_1"/>
    <property type="match status" value="1"/>
</dbReference>
<dbReference type="PROSITE" id="PS51379">
    <property type="entry name" value="4FE4S_FER_2"/>
    <property type="match status" value="1"/>
</dbReference>
<gene>
    <name type="primary">SDH2</name>
    <name type="synonym">sucDH1</name>
</gene>
<proteinExistence type="inferred from homology"/>
<sequence>MINIPNSIRPFIRSANRTPCYLRSISSSSSSSFATPAEEHAGKQPSSAVPVKEFSIYRWNPDEPSKKPTLQTYSIDLKKCGPMVLDALIKIKNELDPTLTFRRSCREGICGSCAMNIDGVNTLACLKRINKETSAPVKIYPLPHMYIIKDLVPDMTHFYKQYKSIEPFLKNDNPPAQGEFLQSPEDRKKLDGMYECILCACCSTSCPSYWWNQDEYLGPAVLMQAYRWMADSRDSYGEDRKEKLQNTLSLYRCHTIFNCTKTCPKGLNPAKAISHIKREMASA</sequence>
<protein>
    <recommendedName>
        <fullName>Succinate dehydrogenase [ubiquinone] iron-sulfur subunit, mitochondrial</fullName>
        <ecNumber>1.3.5.1</ecNumber>
    </recommendedName>
    <alternativeName>
        <fullName>Iron-sulfur subunit of complex II</fullName>
        <shortName>Ip</shortName>
    </alternativeName>
</protein>
<name>SDHB_UROFA</name>
<keyword id="KW-0001">2Fe-2S</keyword>
<keyword id="KW-0003">3Fe-4S</keyword>
<keyword id="KW-0004">4Fe-4S</keyword>
<keyword id="KW-0249">Electron transport</keyword>
<keyword id="KW-0408">Iron</keyword>
<keyword id="KW-0411">Iron-sulfur</keyword>
<keyword id="KW-0472">Membrane</keyword>
<keyword id="KW-0479">Metal-binding</keyword>
<keyword id="KW-0496">Mitochondrion</keyword>
<keyword id="KW-0999">Mitochondrion inner membrane</keyword>
<keyword id="KW-0560">Oxidoreductase</keyword>
<keyword id="KW-0809">Transit peptide</keyword>
<keyword id="KW-0813">Transport</keyword>
<keyword id="KW-0816">Tricarboxylic acid cycle</keyword>
<comment type="function">
    <text evidence="1">Iron-sulfur protein (IP) subunit of succinate dehydrogenase (SDH) that is involved in complex II of the mitochondrial electron transport chain and is responsible for transferring electrons from succinate to ubiquinone (coenzyme Q).</text>
</comment>
<comment type="catalytic activity">
    <reaction>
        <text>a quinone + succinate = fumarate + a quinol</text>
        <dbReference type="Rhea" id="RHEA:40523"/>
        <dbReference type="ChEBI" id="CHEBI:24646"/>
        <dbReference type="ChEBI" id="CHEBI:29806"/>
        <dbReference type="ChEBI" id="CHEBI:30031"/>
        <dbReference type="ChEBI" id="CHEBI:132124"/>
        <dbReference type="EC" id="1.3.5.1"/>
    </reaction>
</comment>
<comment type="cofactor">
    <cofactor evidence="1">
        <name>[2Fe-2S] cluster</name>
        <dbReference type="ChEBI" id="CHEBI:190135"/>
    </cofactor>
    <text evidence="1">Binds 1 [2Fe-2S] cluster.</text>
</comment>
<comment type="cofactor">
    <cofactor evidence="1">
        <name>[3Fe-4S] cluster</name>
        <dbReference type="ChEBI" id="CHEBI:21137"/>
    </cofactor>
    <text evidence="1">Binds 1 [3Fe-4S] cluster.</text>
</comment>
<comment type="cofactor">
    <cofactor evidence="1">
        <name>[4Fe-4S] cluster</name>
        <dbReference type="ChEBI" id="CHEBI:49883"/>
    </cofactor>
    <text evidence="1">Binds 1 [4Fe-4S] cluster.</text>
</comment>
<comment type="pathway">
    <text>Carbohydrate metabolism; tricarboxylic acid cycle; fumarate from succinate (eukaryal route): step 1/1.</text>
</comment>
<comment type="subunit">
    <text evidence="1">Component of complex II composed of four subunits: a flavoprotein (FP), an iron-sulfur protein (IP), and a cytochrome b composed of a large and a small subunit.</text>
</comment>
<comment type="subcellular location">
    <subcellularLocation>
        <location evidence="1">Mitochondrion inner membrane</location>
        <topology evidence="1">Peripheral membrane protein</topology>
        <orientation evidence="1">Matrix side</orientation>
    </subcellularLocation>
</comment>
<comment type="similarity">
    <text evidence="4">Belongs to the succinate dehydrogenase/fumarate reductase iron-sulfur protein family.</text>
</comment>
<organism>
    <name type="scientific">Uromyces fabae</name>
    <name type="common">Rust fungus</name>
    <dbReference type="NCBI Taxonomy" id="55588"/>
    <lineage>
        <taxon>Eukaryota</taxon>
        <taxon>Fungi</taxon>
        <taxon>Dikarya</taxon>
        <taxon>Basidiomycota</taxon>
        <taxon>Pucciniomycotina</taxon>
        <taxon>Pucciniomycetes</taxon>
        <taxon>Pucciniales</taxon>
        <taxon>Pucciniaceae</taxon>
        <taxon>Uromyces</taxon>
    </lineage>
</organism>
<accession>Q70KF8</accession>
<feature type="transit peptide" description="Mitochondrion">
    <location>
        <begin position="1"/>
        <end status="unknown"/>
    </location>
</feature>
<feature type="chain" id="PRO_0000010351" description="Succinate dehydrogenase [ubiquinone] iron-sulfur subunit, mitochondrial">
    <location>
        <begin status="unknown"/>
        <end position="283"/>
    </location>
</feature>
<feature type="domain" description="2Fe-2S ferredoxin-type" evidence="2">
    <location>
        <begin position="66"/>
        <end position="145"/>
    </location>
</feature>
<feature type="domain" description="4Fe-4S ferredoxin-type" evidence="3">
    <location>
        <begin position="186"/>
        <end position="216"/>
    </location>
</feature>
<feature type="binding site" evidence="1">
    <location>
        <position position="105"/>
    </location>
    <ligand>
        <name>[2Fe-2S] cluster</name>
        <dbReference type="ChEBI" id="CHEBI:190135"/>
    </ligand>
</feature>
<feature type="binding site" evidence="1">
    <location>
        <position position="110"/>
    </location>
    <ligand>
        <name>[2Fe-2S] cluster</name>
        <dbReference type="ChEBI" id="CHEBI:190135"/>
    </ligand>
</feature>
<feature type="binding site" evidence="1">
    <location>
        <position position="113"/>
    </location>
    <ligand>
        <name>[2Fe-2S] cluster</name>
        <dbReference type="ChEBI" id="CHEBI:190135"/>
    </ligand>
</feature>
<feature type="binding site" evidence="1">
    <location>
        <position position="125"/>
    </location>
    <ligand>
        <name>[2Fe-2S] cluster</name>
        <dbReference type="ChEBI" id="CHEBI:190135"/>
    </ligand>
</feature>
<feature type="binding site" evidence="1">
    <location>
        <position position="196"/>
    </location>
    <ligand>
        <name>[4Fe-4S] cluster</name>
        <dbReference type="ChEBI" id="CHEBI:49883"/>
    </ligand>
</feature>
<feature type="binding site" evidence="1">
    <location>
        <position position="199"/>
    </location>
    <ligand>
        <name>[4Fe-4S] cluster</name>
        <dbReference type="ChEBI" id="CHEBI:49883"/>
    </ligand>
</feature>
<feature type="binding site" evidence="1">
    <location>
        <position position="202"/>
    </location>
    <ligand>
        <name>[4Fe-4S] cluster</name>
        <dbReference type="ChEBI" id="CHEBI:49883"/>
    </ligand>
</feature>
<feature type="binding site" evidence="1">
    <location>
        <position position="206"/>
    </location>
    <ligand>
        <name>[3Fe-4S] cluster</name>
        <dbReference type="ChEBI" id="CHEBI:21137"/>
    </ligand>
</feature>
<feature type="binding site" evidence="1">
    <location>
        <position position="211"/>
    </location>
    <ligand>
        <name>a ubiquinone</name>
        <dbReference type="ChEBI" id="CHEBI:16389"/>
        <note>ligand shared with DHSD</note>
    </ligand>
</feature>
<feature type="binding site" evidence="1">
    <location>
        <position position="253"/>
    </location>
    <ligand>
        <name>[3Fe-4S] cluster</name>
        <dbReference type="ChEBI" id="CHEBI:21137"/>
    </ligand>
</feature>
<feature type="binding site" evidence="1">
    <location>
        <position position="259"/>
    </location>
    <ligand>
        <name>[3Fe-4S] cluster</name>
        <dbReference type="ChEBI" id="CHEBI:21137"/>
    </ligand>
</feature>
<feature type="binding site" evidence="1">
    <location>
        <position position="263"/>
    </location>
    <ligand>
        <name>[4Fe-4S] cluster</name>
        <dbReference type="ChEBI" id="CHEBI:49883"/>
    </ligand>
</feature>
<reference key="1">
    <citation type="submission" date="2003-07" db="EMBL/GenBank/DDBJ databases">
        <title>Prelude to transformation: characterization of the beta-tubulin and succinate dehydrogenase genes from the rust fungus Uromyces fabae.</title>
        <authorList>
            <person name="Wirsel S.G.R."/>
            <person name="Voegele R.T."/>
            <person name="Baenninger R."/>
            <person name="Hahn M."/>
            <person name="Mendgen K.W."/>
        </authorList>
    </citation>
    <scope>NUCLEOTIDE SEQUENCE [GENOMIC DNA]</scope>
</reference>